<evidence type="ECO:0000255" key="1">
    <source>
        <dbReference type="HAMAP-Rule" id="MF_01302"/>
    </source>
</evidence>
<evidence type="ECO:0000305" key="2"/>
<proteinExistence type="inferred from homology"/>
<sequence>MSMQDPIADMLTRIRNGQAANKVAVTMPSSKLKVAIANVLKEEGFIEDFKIEGDTKPVLELALKYFQGKAVVESIQRISRPGLRIYKKKDELPKVMAGLGIAVISTSKGVMTDRAARQAGLGGEIICYVA</sequence>
<organism>
    <name type="scientific">Yersinia pestis (strain Pestoides F)</name>
    <dbReference type="NCBI Taxonomy" id="386656"/>
    <lineage>
        <taxon>Bacteria</taxon>
        <taxon>Pseudomonadati</taxon>
        <taxon>Pseudomonadota</taxon>
        <taxon>Gammaproteobacteria</taxon>
        <taxon>Enterobacterales</taxon>
        <taxon>Yersiniaceae</taxon>
        <taxon>Yersinia</taxon>
    </lineage>
</organism>
<reference key="1">
    <citation type="submission" date="2007-02" db="EMBL/GenBank/DDBJ databases">
        <title>Complete sequence of chromosome of Yersinia pestis Pestoides F.</title>
        <authorList>
            <consortium name="US DOE Joint Genome Institute"/>
            <person name="Copeland A."/>
            <person name="Lucas S."/>
            <person name="Lapidus A."/>
            <person name="Barry K."/>
            <person name="Detter J.C."/>
            <person name="Glavina del Rio T."/>
            <person name="Hammon N."/>
            <person name="Israni S."/>
            <person name="Dalin E."/>
            <person name="Tice H."/>
            <person name="Pitluck S."/>
            <person name="Di Bartolo G."/>
            <person name="Chain P."/>
            <person name="Malfatti S."/>
            <person name="Shin M."/>
            <person name="Vergez L."/>
            <person name="Schmutz J."/>
            <person name="Larimer F."/>
            <person name="Land M."/>
            <person name="Hauser L."/>
            <person name="Worsham P."/>
            <person name="Chu M."/>
            <person name="Bearden S."/>
            <person name="Garcia E."/>
            <person name="Richardson P."/>
        </authorList>
    </citation>
    <scope>NUCLEOTIDE SEQUENCE [LARGE SCALE GENOMIC DNA]</scope>
    <source>
        <strain>Pestoides F</strain>
    </source>
</reference>
<feature type="chain" id="PRO_0000305762" description="Small ribosomal subunit protein uS8">
    <location>
        <begin position="1"/>
        <end position="130"/>
    </location>
</feature>
<accession>A4TH06</accession>
<comment type="function">
    <text evidence="1">One of the primary rRNA binding proteins, it binds directly to 16S rRNA central domain where it helps coordinate assembly of the platform of the 30S subunit.</text>
</comment>
<comment type="subunit">
    <text evidence="1">Part of the 30S ribosomal subunit. Contacts proteins S5 and S12.</text>
</comment>
<comment type="similarity">
    <text evidence="1">Belongs to the universal ribosomal protein uS8 family.</text>
</comment>
<gene>
    <name evidence="1" type="primary">rpsH</name>
    <name type="ordered locus">YPDSF_0147</name>
</gene>
<keyword id="KW-0687">Ribonucleoprotein</keyword>
<keyword id="KW-0689">Ribosomal protein</keyword>
<keyword id="KW-0694">RNA-binding</keyword>
<keyword id="KW-0699">rRNA-binding</keyword>
<protein>
    <recommendedName>
        <fullName evidence="1">Small ribosomal subunit protein uS8</fullName>
    </recommendedName>
    <alternativeName>
        <fullName evidence="2">30S ribosomal protein S8</fullName>
    </alternativeName>
</protein>
<dbReference type="EMBL" id="CP000668">
    <property type="protein sequence ID" value="ABP38569.1"/>
    <property type="molecule type" value="Genomic_DNA"/>
</dbReference>
<dbReference type="RefSeq" id="WP_002213332.1">
    <property type="nucleotide sequence ID" value="NZ_CP009715.1"/>
</dbReference>
<dbReference type="SMR" id="A4TH06"/>
<dbReference type="GeneID" id="96663182"/>
<dbReference type="KEGG" id="ypp:YPDSF_0147"/>
<dbReference type="PATRIC" id="fig|386656.14.peg.420"/>
<dbReference type="GO" id="GO:1990904">
    <property type="term" value="C:ribonucleoprotein complex"/>
    <property type="evidence" value="ECO:0007669"/>
    <property type="project" value="UniProtKB-KW"/>
</dbReference>
<dbReference type="GO" id="GO:0005840">
    <property type="term" value="C:ribosome"/>
    <property type="evidence" value="ECO:0007669"/>
    <property type="project" value="UniProtKB-KW"/>
</dbReference>
<dbReference type="GO" id="GO:0019843">
    <property type="term" value="F:rRNA binding"/>
    <property type="evidence" value="ECO:0007669"/>
    <property type="project" value="UniProtKB-UniRule"/>
</dbReference>
<dbReference type="GO" id="GO:0003735">
    <property type="term" value="F:structural constituent of ribosome"/>
    <property type="evidence" value="ECO:0007669"/>
    <property type="project" value="InterPro"/>
</dbReference>
<dbReference type="GO" id="GO:0006412">
    <property type="term" value="P:translation"/>
    <property type="evidence" value="ECO:0007669"/>
    <property type="project" value="UniProtKB-UniRule"/>
</dbReference>
<dbReference type="FunFam" id="3.30.1370.30:FF:000003">
    <property type="entry name" value="30S ribosomal protein S8"/>
    <property type="match status" value="1"/>
</dbReference>
<dbReference type="FunFam" id="3.30.1490.10:FF:000001">
    <property type="entry name" value="30S ribosomal protein S8"/>
    <property type="match status" value="1"/>
</dbReference>
<dbReference type="Gene3D" id="3.30.1370.30">
    <property type="match status" value="1"/>
</dbReference>
<dbReference type="Gene3D" id="3.30.1490.10">
    <property type="match status" value="1"/>
</dbReference>
<dbReference type="HAMAP" id="MF_01302_B">
    <property type="entry name" value="Ribosomal_uS8_B"/>
    <property type="match status" value="1"/>
</dbReference>
<dbReference type="InterPro" id="IPR000630">
    <property type="entry name" value="Ribosomal_uS8"/>
</dbReference>
<dbReference type="InterPro" id="IPR047863">
    <property type="entry name" value="Ribosomal_uS8_CS"/>
</dbReference>
<dbReference type="InterPro" id="IPR035987">
    <property type="entry name" value="Ribosomal_uS8_sf"/>
</dbReference>
<dbReference type="NCBIfam" id="NF001109">
    <property type="entry name" value="PRK00136.1"/>
    <property type="match status" value="1"/>
</dbReference>
<dbReference type="PANTHER" id="PTHR11758">
    <property type="entry name" value="40S RIBOSOMAL PROTEIN S15A"/>
    <property type="match status" value="1"/>
</dbReference>
<dbReference type="Pfam" id="PF00410">
    <property type="entry name" value="Ribosomal_S8"/>
    <property type="match status" value="1"/>
</dbReference>
<dbReference type="SUPFAM" id="SSF56047">
    <property type="entry name" value="Ribosomal protein S8"/>
    <property type="match status" value="1"/>
</dbReference>
<dbReference type="PROSITE" id="PS00053">
    <property type="entry name" value="RIBOSOMAL_S8"/>
    <property type="match status" value="1"/>
</dbReference>
<name>RS8_YERPP</name>